<sequence length="62" mass="7040">MKANELKNATAAELEAKGTELTKELFNVKFQLHTGRLENTSKVSNLRKDIARVKTILREKRG</sequence>
<protein>
    <recommendedName>
        <fullName evidence="1">Large ribosomal subunit protein uL29</fullName>
    </recommendedName>
    <alternativeName>
        <fullName evidence="2">50S ribosomal protein L29</fullName>
    </alternativeName>
</protein>
<reference key="1">
    <citation type="submission" date="2008-07" db="EMBL/GenBank/DDBJ databases">
        <title>Complete sequence of Geobacter bemidjiensis BEM.</title>
        <authorList>
            <consortium name="US DOE Joint Genome Institute"/>
            <person name="Lucas S."/>
            <person name="Copeland A."/>
            <person name="Lapidus A."/>
            <person name="Glavina del Rio T."/>
            <person name="Dalin E."/>
            <person name="Tice H."/>
            <person name="Bruce D."/>
            <person name="Goodwin L."/>
            <person name="Pitluck S."/>
            <person name="Kiss H."/>
            <person name="Brettin T."/>
            <person name="Detter J.C."/>
            <person name="Han C."/>
            <person name="Kuske C.R."/>
            <person name="Schmutz J."/>
            <person name="Larimer F."/>
            <person name="Land M."/>
            <person name="Hauser L."/>
            <person name="Kyrpides N."/>
            <person name="Lykidis A."/>
            <person name="Lovley D."/>
            <person name="Richardson P."/>
        </authorList>
    </citation>
    <scope>NUCLEOTIDE SEQUENCE [LARGE SCALE GENOMIC DNA]</scope>
    <source>
        <strain>ATCC BAA-1014 / DSM 16622 / JCM 12645 / Bem</strain>
    </source>
</reference>
<gene>
    <name evidence="1" type="primary">rpmC</name>
    <name type="ordered locus">Gbem_0941</name>
</gene>
<name>RL29_CITBB</name>
<organism>
    <name type="scientific">Citrifermentans bemidjiense (strain ATCC BAA-1014 / DSM 16622 / JCM 12645 / Bem)</name>
    <name type="common">Geobacter bemidjiensis</name>
    <dbReference type="NCBI Taxonomy" id="404380"/>
    <lineage>
        <taxon>Bacteria</taxon>
        <taxon>Pseudomonadati</taxon>
        <taxon>Thermodesulfobacteriota</taxon>
        <taxon>Desulfuromonadia</taxon>
        <taxon>Geobacterales</taxon>
        <taxon>Geobacteraceae</taxon>
        <taxon>Citrifermentans</taxon>
    </lineage>
</organism>
<proteinExistence type="inferred from homology"/>
<evidence type="ECO:0000255" key="1">
    <source>
        <dbReference type="HAMAP-Rule" id="MF_00374"/>
    </source>
</evidence>
<evidence type="ECO:0000305" key="2"/>
<dbReference type="EMBL" id="CP001124">
    <property type="protein sequence ID" value="ACH37962.1"/>
    <property type="molecule type" value="Genomic_DNA"/>
</dbReference>
<dbReference type="RefSeq" id="WP_012529374.1">
    <property type="nucleotide sequence ID" value="NC_011146.1"/>
</dbReference>
<dbReference type="SMR" id="B5EFQ8"/>
<dbReference type="STRING" id="404380.Gbem_0941"/>
<dbReference type="KEGG" id="gbm:Gbem_0941"/>
<dbReference type="eggNOG" id="COG0255">
    <property type="taxonomic scope" value="Bacteria"/>
</dbReference>
<dbReference type="HOGENOM" id="CLU_158491_5_2_7"/>
<dbReference type="OrthoDB" id="9815192at2"/>
<dbReference type="Proteomes" id="UP000008825">
    <property type="component" value="Chromosome"/>
</dbReference>
<dbReference type="GO" id="GO:0022625">
    <property type="term" value="C:cytosolic large ribosomal subunit"/>
    <property type="evidence" value="ECO:0007669"/>
    <property type="project" value="TreeGrafter"/>
</dbReference>
<dbReference type="GO" id="GO:0003735">
    <property type="term" value="F:structural constituent of ribosome"/>
    <property type="evidence" value="ECO:0007669"/>
    <property type="project" value="InterPro"/>
</dbReference>
<dbReference type="GO" id="GO:0006412">
    <property type="term" value="P:translation"/>
    <property type="evidence" value="ECO:0007669"/>
    <property type="project" value="UniProtKB-UniRule"/>
</dbReference>
<dbReference type="CDD" id="cd00427">
    <property type="entry name" value="Ribosomal_L29_HIP"/>
    <property type="match status" value="1"/>
</dbReference>
<dbReference type="FunFam" id="1.10.287.310:FF:000001">
    <property type="entry name" value="50S ribosomal protein L29"/>
    <property type="match status" value="1"/>
</dbReference>
<dbReference type="Gene3D" id="1.10.287.310">
    <property type="match status" value="1"/>
</dbReference>
<dbReference type="HAMAP" id="MF_00374">
    <property type="entry name" value="Ribosomal_uL29"/>
    <property type="match status" value="1"/>
</dbReference>
<dbReference type="InterPro" id="IPR050063">
    <property type="entry name" value="Ribosomal_protein_uL29"/>
</dbReference>
<dbReference type="InterPro" id="IPR001854">
    <property type="entry name" value="Ribosomal_uL29"/>
</dbReference>
<dbReference type="InterPro" id="IPR018254">
    <property type="entry name" value="Ribosomal_uL29_CS"/>
</dbReference>
<dbReference type="InterPro" id="IPR036049">
    <property type="entry name" value="Ribosomal_uL29_sf"/>
</dbReference>
<dbReference type="NCBIfam" id="TIGR00012">
    <property type="entry name" value="L29"/>
    <property type="match status" value="1"/>
</dbReference>
<dbReference type="PANTHER" id="PTHR10916">
    <property type="entry name" value="60S RIBOSOMAL PROTEIN L35/50S RIBOSOMAL PROTEIN L29"/>
    <property type="match status" value="1"/>
</dbReference>
<dbReference type="PANTHER" id="PTHR10916:SF0">
    <property type="entry name" value="LARGE RIBOSOMAL SUBUNIT PROTEIN UL29C"/>
    <property type="match status" value="1"/>
</dbReference>
<dbReference type="Pfam" id="PF00831">
    <property type="entry name" value="Ribosomal_L29"/>
    <property type="match status" value="1"/>
</dbReference>
<dbReference type="SUPFAM" id="SSF46561">
    <property type="entry name" value="Ribosomal protein L29 (L29p)"/>
    <property type="match status" value="1"/>
</dbReference>
<dbReference type="PROSITE" id="PS00579">
    <property type="entry name" value="RIBOSOMAL_L29"/>
    <property type="match status" value="1"/>
</dbReference>
<accession>B5EFQ8</accession>
<keyword id="KW-1185">Reference proteome</keyword>
<keyword id="KW-0687">Ribonucleoprotein</keyword>
<keyword id="KW-0689">Ribosomal protein</keyword>
<comment type="similarity">
    <text evidence="1">Belongs to the universal ribosomal protein uL29 family.</text>
</comment>
<feature type="chain" id="PRO_1000194017" description="Large ribosomal subunit protein uL29">
    <location>
        <begin position="1"/>
        <end position="62"/>
    </location>
</feature>